<protein>
    <recommendedName>
        <fullName>Histidine decarboxylase small chain</fullName>
        <shortName>HDC</shortName>
        <ecNumber>4.1.1.22</ecNumber>
    </recommendedName>
</protein>
<accession>P00863</accession>
<reference key="1">
    <citation type="journal article" date="1975" name="Eur. J. Biochem.">
        <title>Structural studies of histidine decarboxylase from Micrococcus sp. N.</title>
        <authorList>
            <person name="Prozorovski V."/>
            <person name="Joernvall H."/>
        </authorList>
    </citation>
    <scope>PROTEIN SEQUENCE</scope>
</reference>
<sequence length="38" mass="4349">MKKTDKILKEIGIQRVAIMEGKKYSKGFMEDGDIGVQY</sequence>
<keyword id="KW-0210">Decarboxylase</keyword>
<keyword id="KW-0903">Direct protein sequencing</keyword>
<keyword id="KW-0456">Lyase</keyword>
<keyword id="KW-0670">Pyruvate</keyword>
<proteinExistence type="evidence at protein level"/>
<comment type="catalytic activity">
    <reaction>
        <text>L-histidine + H(+) = histamine + CO2</text>
        <dbReference type="Rhea" id="RHEA:20840"/>
        <dbReference type="ChEBI" id="CHEBI:15378"/>
        <dbReference type="ChEBI" id="CHEBI:16526"/>
        <dbReference type="ChEBI" id="CHEBI:57595"/>
        <dbReference type="ChEBI" id="CHEBI:58432"/>
        <dbReference type="EC" id="4.1.1.22"/>
    </reaction>
</comment>
<comment type="cofactor">
    <cofactor>
        <name>pyruvate</name>
        <dbReference type="ChEBI" id="CHEBI:15361"/>
    </cofactor>
    <text>Binds 1 pyruvoyl group covalently per subunit.</text>
</comment>
<comment type="subunit">
    <text>Heterohexamer of 3 large and 3 small chains.</text>
</comment>
<organism>
    <name type="scientific">Micrococcus sp</name>
    <dbReference type="NCBI Taxonomy" id="1271"/>
    <lineage>
        <taxon>Bacteria</taxon>
        <taxon>Bacillati</taxon>
        <taxon>Actinomycetota</taxon>
        <taxon>Actinomycetes</taxon>
        <taxon>Micrococcales</taxon>
        <taxon>Micrococcaceae</taxon>
        <taxon>Micrococcus</taxon>
    </lineage>
</organism>
<dbReference type="EC" id="4.1.1.22"/>
<dbReference type="SMR" id="P00863"/>
<dbReference type="GO" id="GO:0004398">
    <property type="term" value="F:histidine decarboxylase activity"/>
    <property type="evidence" value="ECO:0007669"/>
    <property type="project" value="UniProtKB-EC"/>
</dbReference>
<dbReference type="GO" id="GO:0006520">
    <property type="term" value="P:amino acid metabolic process"/>
    <property type="evidence" value="ECO:0007669"/>
    <property type="project" value="InterPro"/>
</dbReference>
<dbReference type="Gene3D" id="4.10.510.10">
    <property type="entry name" value="Pyruvoyl-Dependent Histidine Decarboxylas, subunit A"/>
    <property type="match status" value="1"/>
</dbReference>
<dbReference type="InterPro" id="IPR016106">
    <property type="entry name" value="Pyr-dep_his-deCO2ase_N"/>
</dbReference>
<dbReference type="InterPro" id="IPR016104">
    <property type="entry name" value="Pyr-dep_his/arg-deCO2ase"/>
</dbReference>
<dbReference type="SUPFAM" id="SSF56271">
    <property type="entry name" value="Pyruvoyl-dependent histidine and arginine decarboxylases"/>
    <property type="match status" value="1"/>
</dbReference>
<feature type="chain" id="PRO_0000157474" description="Histidine decarboxylase small chain">
    <location>
        <begin position="1"/>
        <end position="38" status="greater than"/>
    </location>
</feature>
<feature type="non-terminal residue">
    <location>
        <position position="38"/>
    </location>
</feature>
<name>DCHS_MICSP</name>